<name>TALY_CERS4</name>
<feature type="chain" id="PRO_0000429968" description="Tyrosine ammonia-lyase">
    <location>
        <begin position="1"/>
        <end position="523"/>
    </location>
</feature>
<feature type="active site" description="Proton donor/acceptor" evidence="1">
    <location>
        <position position="60"/>
    </location>
</feature>
<feature type="binding site">
    <location>
        <position position="89"/>
    </location>
    <ligand>
        <name>substrate</name>
    </ligand>
</feature>
<feature type="binding site">
    <location>
        <position position="303"/>
    </location>
    <ligand>
        <name>substrate</name>
    </ligand>
</feature>
<feature type="binding site">
    <location>
        <begin position="432"/>
        <end position="436"/>
    </location>
    <ligand>
        <name>substrate</name>
    </ligand>
</feature>
<feature type="modified residue" description="2,3-didehydroalanine (Ser)" evidence="4">
    <location>
        <position position="150"/>
    </location>
</feature>
<feature type="cross-link" description="5-imidazolinone (Ala-Gly)" evidence="4">
    <location>
        <begin position="149"/>
        <end position="151"/>
    </location>
</feature>
<feature type="mutagenesis site" description="Abolishes tyrosine ammonia-lyase activity. Increases affinity for L-Phe. Increases the low intrinsic phenylalanine ammonia-lyase activity about twentyfold.">
    <original>H</original>
    <variation>F</variation>
    <location>
        <position position="89"/>
    </location>
</feature>
<feature type="strand" evidence="6">
    <location>
        <begin position="10"/>
        <end position="15"/>
    </location>
</feature>
<feature type="helix" evidence="6">
    <location>
        <begin position="19"/>
        <end position="26"/>
    </location>
</feature>
<feature type="strand" evidence="6">
    <location>
        <begin position="29"/>
        <end position="34"/>
    </location>
</feature>
<feature type="helix" evidence="6">
    <location>
        <begin position="36"/>
        <end position="54"/>
    </location>
</feature>
<feature type="turn" evidence="6">
    <location>
        <begin position="60"/>
        <end position="62"/>
    </location>
</feature>
<feature type="helix" evidence="6">
    <location>
        <begin position="67"/>
        <end position="71"/>
    </location>
</feature>
<feature type="helix" evidence="6">
    <location>
        <begin position="76"/>
        <end position="78"/>
    </location>
</feature>
<feature type="helix" evidence="6">
    <location>
        <begin position="79"/>
        <end position="90"/>
    </location>
</feature>
<feature type="strand" evidence="6">
    <location>
        <begin position="94"/>
        <end position="97"/>
    </location>
</feature>
<feature type="helix" evidence="6">
    <location>
        <begin position="100"/>
        <end position="114"/>
    </location>
</feature>
<feature type="helix" evidence="6">
    <location>
        <begin position="123"/>
        <end position="133"/>
    </location>
</feature>
<feature type="strand" evidence="6">
    <location>
        <begin position="142"/>
        <end position="144"/>
    </location>
</feature>
<feature type="helix" evidence="6">
    <location>
        <begin position="153"/>
        <end position="163"/>
    </location>
</feature>
<feature type="helix" evidence="6">
    <location>
        <begin position="179"/>
        <end position="185"/>
    </location>
</feature>
<feature type="helix" evidence="6">
    <location>
        <begin position="198"/>
        <end position="200"/>
    </location>
</feature>
<feature type="strand" evidence="7">
    <location>
        <begin position="203"/>
        <end position="205"/>
    </location>
</feature>
<feature type="helix" evidence="6">
    <location>
        <begin position="206"/>
        <end position="236"/>
    </location>
</feature>
<feature type="helix" evidence="6">
    <location>
        <begin position="241"/>
        <end position="244"/>
    </location>
</feature>
<feature type="helix" evidence="6">
    <location>
        <begin position="246"/>
        <end position="251"/>
    </location>
</feature>
<feature type="helix" evidence="6">
    <location>
        <begin position="255"/>
        <end position="267"/>
    </location>
</feature>
<feature type="turn" evidence="6">
    <location>
        <begin position="268"/>
        <end position="270"/>
    </location>
</feature>
<feature type="strand" evidence="6">
    <location>
        <begin position="272"/>
        <end position="275"/>
    </location>
</feature>
<feature type="helix" evidence="6">
    <location>
        <begin position="279"/>
        <end position="281"/>
    </location>
</feature>
<feature type="helix" evidence="6">
    <location>
        <begin position="286"/>
        <end position="288"/>
    </location>
</feature>
<feature type="helix" evidence="6">
    <location>
        <begin position="300"/>
        <end position="303"/>
    </location>
</feature>
<feature type="helix" evidence="6">
    <location>
        <begin position="305"/>
        <end position="327"/>
    </location>
</feature>
<feature type="strand" evidence="6">
    <location>
        <begin position="333"/>
        <end position="335"/>
    </location>
</feature>
<feature type="strand" evidence="6">
    <location>
        <begin position="341"/>
        <end position="343"/>
    </location>
</feature>
<feature type="helix" evidence="6">
    <location>
        <begin position="353"/>
        <end position="380"/>
    </location>
</feature>
<feature type="turn" evidence="6">
    <location>
        <begin position="383"/>
        <end position="388"/>
    </location>
</feature>
<feature type="helix" evidence="6">
    <location>
        <begin position="391"/>
        <end position="393"/>
    </location>
</feature>
<feature type="strand" evidence="6">
    <location>
        <begin position="396"/>
        <end position="398"/>
    </location>
</feature>
<feature type="helix" evidence="6">
    <location>
        <begin position="405"/>
        <end position="419"/>
    </location>
</feature>
<feature type="helix" evidence="6">
    <location>
        <begin position="425"/>
        <end position="427"/>
    </location>
</feature>
<feature type="turn" evidence="6">
    <location>
        <begin position="432"/>
        <end position="435"/>
    </location>
</feature>
<feature type="helix" evidence="6">
    <location>
        <begin position="442"/>
        <end position="475"/>
    </location>
</feature>
<feature type="turn" evidence="6">
    <location>
        <begin position="476"/>
        <end position="481"/>
    </location>
</feature>
<feature type="helix" evidence="6">
    <location>
        <begin position="484"/>
        <end position="494"/>
    </location>
</feature>
<feature type="helix" evidence="6">
    <location>
        <begin position="507"/>
        <end position="517"/>
    </location>
</feature>
<gene>
    <name type="primary">hutH</name>
    <name evidence="3" type="ordered locus">RHOS4_36060</name>
    <name evidence="5" type="ORF">RSP_3574</name>
</gene>
<sequence length="523" mass="54914">MLAMSPPKPAVELDRHIDLDQAHAVASGGARIVLAPPARDRCRASEARLGAVIREARHVYGLTTGFGPLANRLISGENVRTLQANLVHHLASGVGPVLDWTTARAMVLARLVSIAQGASGASEGTIARLIDLLNSELAPAVPSRGTVGASGDLTPLAHMVLCLQGRGDFLDRDGTRLDGAEGLRRGRLQPLDLSHRDALALVNGTSAMTGIALVNAHACRHLGNWAVALTALLAECLRGRTEAWAAALSDLRPHPGQKDAAARLRARVDGSARVVRHVIAERRLDAGDIGTEPEAGQDAYSLRCAPQVLGAGFDTLAWHDRVLTIELNAVTDNPVFPPDGSVPALHGGNFMGQHVALTSDALATAVTVLAGLAERQIARLTDERLNRGLPPFLHRGPAGLNSGFMGAQVTATALLAEMRATGPASIHSISTNAANQDVVSLGTIAARLCREKIDRWAEILAILALCLAQAAELRCGSGLDGVSPAGKKLVQALREQFPPLETDRPLGQEIAALATHLLQQSPV</sequence>
<proteinExistence type="evidence at protein level"/>
<accession>Q3IWB0</accession>
<organism>
    <name type="scientific">Cereibacter sphaeroides (strain ATCC 17023 / DSM 158 / JCM 6121 / CCUG 31486 / LMG 2827 / NBRC 12203 / NCIMB 8253 / ATH 2.4.1.)</name>
    <name type="common">Rhodobacter sphaeroides</name>
    <dbReference type="NCBI Taxonomy" id="272943"/>
    <lineage>
        <taxon>Bacteria</taxon>
        <taxon>Pseudomonadati</taxon>
        <taxon>Pseudomonadota</taxon>
        <taxon>Alphaproteobacteria</taxon>
        <taxon>Rhodobacterales</taxon>
        <taxon>Paracoccaceae</taxon>
        <taxon>Cereibacter</taxon>
    </lineage>
</organism>
<dbReference type="EC" id="4.3.1.23"/>
<dbReference type="EMBL" id="CP000144">
    <property type="protein sequence ID" value="ABA81174.1"/>
    <property type="molecule type" value="Genomic_DNA"/>
</dbReference>
<dbReference type="RefSeq" id="WP_011339422.1">
    <property type="nucleotide sequence ID" value="NC_007494.2"/>
</dbReference>
<dbReference type="RefSeq" id="YP_355075.1">
    <property type="nucleotide sequence ID" value="NC_007494.2"/>
</dbReference>
<dbReference type="PDB" id="2O6Y">
    <property type="method" value="X-ray"/>
    <property type="resolution" value="1.50 A"/>
    <property type="chains" value="A/B/C/D/E/F/G/H=1-523"/>
</dbReference>
<dbReference type="PDB" id="2O78">
    <property type="method" value="X-ray"/>
    <property type="resolution" value="1.90 A"/>
    <property type="chains" value="A/B/C/D/E/F/G/H=1-523"/>
</dbReference>
<dbReference type="PDB" id="2O7B">
    <property type="method" value="X-ray"/>
    <property type="resolution" value="1.60 A"/>
    <property type="chains" value="A/B/C/D/E/F/G/H=1-523"/>
</dbReference>
<dbReference type="PDB" id="2O7D">
    <property type="method" value="X-ray"/>
    <property type="resolution" value="1.90 A"/>
    <property type="chains" value="A/B/C/D/E/F/G/H=1-523"/>
</dbReference>
<dbReference type="PDB" id="2O7E">
    <property type="method" value="X-ray"/>
    <property type="resolution" value="1.75 A"/>
    <property type="chains" value="A/B/C/D/E/F/G/H=1-523"/>
</dbReference>
<dbReference type="PDB" id="2O7F">
    <property type="method" value="X-ray"/>
    <property type="resolution" value="2.00 A"/>
    <property type="chains" value="A/B/C/D/E/F/G/H=1-523"/>
</dbReference>
<dbReference type="PDBsum" id="2O6Y"/>
<dbReference type="PDBsum" id="2O78"/>
<dbReference type="PDBsum" id="2O7B"/>
<dbReference type="PDBsum" id="2O7D"/>
<dbReference type="PDBsum" id="2O7E"/>
<dbReference type="PDBsum" id="2O7F"/>
<dbReference type="SMR" id="Q3IWB0"/>
<dbReference type="STRING" id="272943.RSP_3574"/>
<dbReference type="DrugBank" id="DB01880">
    <property type="generic name" value="3,4-Dihydroxycinnamic Acid"/>
</dbReference>
<dbReference type="DrugBank" id="DB04066">
    <property type="generic name" value="p-Coumaric acid"/>
</dbReference>
<dbReference type="EnsemblBacteria" id="ABA81174">
    <property type="protein sequence ID" value="ABA81174"/>
    <property type="gene ID" value="RSP_3574"/>
</dbReference>
<dbReference type="GeneID" id="3722088"/>
<dbReference type="KEGG" id="rsp:RSP_3574"/>
<dbReference type="PATRIC" id="fig|272943.9.peg.4010"/>
<dbReference type="eggNOG" id="COG2986">
    <property type="taxonomic scope" value="Bacteria"/>
</dbReference>
<dbReference type="OrthoDB" id="9806955at2"/>
<dbReference type="PhylomeDB" id="Q3IWB0"/>
<dbReference type="BRENDA" id="4.3.1.23">
    <property type="organism ID" value="5383"/>
</dbReference>
<dbReference type="SABIO-RK" id="Q3IWB0"/>
<dbReference type="EvolutionaryTrace" id="Q3IWB0"/>
<dbReference type="Proteomes" id="UP000002703">
    <property type="component" value="Chromosome 2"/>
</dbReference>
<dbReference type="GO" id="GO:0042802">
    <property type="term" value="F:identical protein binding"/>
    <property type="evidence" value="ECO:0000353"/>
    <property type="project" value="IntAct"/>
</dbReference>
<dbReference type="GO" id="GO:0052883">
    <property type="term" value="F:tyrosine ammonia-lyase activity"/>
    <property type="evidence" value="ECO:0000314"/>
    <property type="project" value="UniProtKB"/>
</dbReference>
<dbReference type="GO" id="GO:0009699">
    <property type="term" value="P:phenylpropanoid biosynthetic process"/>
    <property type="evidence" value="ECO:0000314"/>
    <property type="project" value="UniProtKB"/>
</dbReference>
<dbReference type="GO" id="GO:0051289">
    <property type="term" value="P:protein homotetramerization"/>
    <property type="evidence" value="ECO:0000314"/>
    <property type="project" value="UniProtKB"/>
</dbReference>
<dbReference type="GO" id="GO:0006572">
    <property type="term" value="P:tyrosine catabolic process"/>
    <property type="evidence" value="ECO:0000314"/>
    <property type="project" value="UniProtKB"/>
</dbReference>
<dbReference type="CDD" id="cd00332">
    <property type="entry name" value="PAL-HAL"/>
    <property type="match status" value="1"/>
</dbReference>
<dbReference type="FunFam" id="1.10.275.10:FF:000005">
    <property type="entry name" value="Histidine ammonia-lyase"/>
    <property type="match status" value="1"/>
</dbReference>
<dbReference type="FunFam" id="1.20.200.10:FF:000012">
    <property type="entry name" value="Tyrosine ammonia-lyase"/>
    <property type="match status" value="1"/>
</dbReference>
<dbReference type="Gene3D" id="1.20.200.10">
    <property type="entry name" value="Fumarase/aspartase (Central domain)"/>
    <property type="match status" value="1"/>
</dbReference>
<dbReference type="Gene3D" id="1.10.275.10">
    <property type="entry name" value="Fumarase/aspartase (N-terminal domain)"/>
    <property type="match status" value="1"/>
</dbReference>
<dbReference type="InterPro" id="IPR001106">
    <property type="entry name" value="Aromatic_Lyase"/>
</dbReference>
<dbReference type="InterPro" id="IPR024083">
    <property type="entry name" value="Fumarase/histidase_N"/>
</dbReference>
<dbReference type="InterPro" id="IPR008948">
    <property type="entry name" value="L-Aspartase-like"/>
</dbReference>
<dbReference type="InterPro" id="IPR022313">
    <property type="entry name" value="Phe/His_NH3-lyase_AS"/>
</dbReference>
<dbReference type="PANTHER" id="PTHR10362">
    <property type="entry name" value="HISTIDINE AMMONIA-LYASE"/>
    <property type="match status" value="1"/>
</dbReference>
<dbReference type="Pfam" id="PF00221">
    <property type="entry name" value="Lyase_aromatic"/>
    <property type="match status" value="1"/>
</dbReference>
<dbReference type="SUPFAM" id="SSF48557">
    <property type="entry name" value="L-aspartase-like"/>
    <property type="match status" value="1"/>
</dbReference>
<dbReference type="PROSITE" id="PS00488">
    <property type="entry name" value="PAL_HISTIDASE"/>
    <property type="match status" value="1"/>
</dbReference>
<protein>
    <recommendedName>
        <fullName>Tyrosine ammonia-lyase</fullName>
        <ecNumber>4.3.1.23</ecNumber>
    </recommendedName>
</protein>
<reference key="1">
    <citation type="submission" date="2005-09" db="EMBL/GenBank/DDBJ databases">
        <title>Complete sequence of chromosome 2 of Rhodobacter sphaeroides 2.4.1.</title>
        <authorList>
            <person name="Copeland A."/>
            <person name="Lucas S."/>
            <person name="Lapidus A."/>
            <person name="Barry K."/>
            <person name="Detter J.C."/>
            <person name="Glavina T."/>
            <person name="Hammon N."/>
            <person name="Israni S."/>
            <person name="Pitluck S."/>
            <person name="Richardson P."/>
            <person name="Mackenzie C."/>
            <person name="Choudhary M."/>
            <person name="Larimer F."/>
            <person name="Hauser L.J."/>
            <person name="Land M."/>
            <person name="Donohue T.J."/>
            <person name="Kaplan S."/>
        </authorList>
    </citation>
    <scope>NUCLEOTIDE SEQUENCE [LARGE SCALE GENOMIC DNA]</scope>
    <source>
        <strain>ATCC 17023 / DSM 158 / JCM 6121 / CCUG 31486 / LMG 2827 / NBRC 12203 / NCIMB 8253 / ATH 2.4.1.</strain>
    </source>
</reference>
<reference key="2">
    <citation type="journal article" date="2006" name="Chem. Biol.">
        <title>Structural determinants and modulation of substrate specificity in phenylalanine-tyrosine ammonia-lyases.</title>
        <authorList>
            <person name="Louie G.V."/>
            <person name="Bowman M.E."/>
            <person name="Moffitt M.C."/>
            <person name="Baiga T.J."/>
            <person name="Moore B.S."/>
            <person name="Noel J.P."/>
        </authorList>
    </citation>
    <scope>X-RAY CRYSTALLOGRAPHY (1.50 ANGSTROMS) OF WILD-TYPE AND MUTANT PHE-89 IN COMPLEXES WITH CINNAMAT; P-COUMARATE AND CAFFEATE</scope>
    <scope>CATALYTIC ACTIVITY</scope>
    <scope>FUNCTION</scope>
    <scope>BIOPHYSICOCHEMICAL PROPERTIES</scope>
    <scope>PTM</scope>
    <scope>DEHYDRATION AT SER-150</scope>
    <scope>SUBUNIT</scope>
</reference>
<keyword id="KW-0002">3D-structure</keyword>
<keyword id="KW-0456">Lyase</keyword>
<keyword id="KW-0587">Phenylpropanoid metabolism</keyword>
<keyword id="KW-1185">Reference proteome</keyword>
<evidence type="ECO:0000250" key="1"/>
<evidence type="ECO:0000269" key="2">
    <source>
    </source>
</evidence>
<evidence type="ECO:0000305" key="3"/>
<evidence type="ECO:0000305" key="4">
    <source>
    </source>
</evidence>
<evidence type="ECO:0000312" key="5">
    <source>
        <dbReference type="EMBL" id="ABA81174.1"/>
    </source>
</evidence>
<evidence type="ECO:0007829" key="6">
    <source>
        <dbReference type="PDB" id="2O6Y"/>
    </source>
</evidence>
<evidence type="ECO:0007829" key="7">
    <source>
        <dbReference type="PDB" id="2O7E"/>
    </source>
</evidence>
<comment type="function">
    <text evidence="2">Catalyzes the non-oxidative deamination of L-tyrosine. Has very low phenylalanine ammonia-lyase activity (in vitro).</text>
</comment>
<comment type="catalytic activity">
    <reaction evidence="2">
        <text>L-tyrosine = (E)-4-coumarate + NH4(+)</text>
        <dbReference type="Rhea" id="RHEA:24906"/>
        <dbReference type="ChEBI" id="CHEBI:12876"/>
        <dbReference type="ChEBI" id="CHEBI:28938"/>
        <dbReference type="ChEBI" id="CHEBI:58315"/>
        <dbReference type="EC" id="4.3.1.23"/>
    </reaction>
</comment>
<comment type="biophysicochemical properties">
    <kinetics>
        <KM evidence="2">74.2 uM for L-Tyr</KM>
        <KM evidence="2">11400 uM for L-Phe</KM>
        <text>kcat is 4.32 sec(-1) for L-Tyr. kcat is 13.1 sec(-1) for L-Phe.</text>
    </kinetics>
</comment>
<comment type="subunit">
    <text evidence="2">Homotetramer.</text>
</comment>
<comment type="interaction">
    <interactant intactId="EBI-9544445">
        <id>Q3IWB0</id>
    </interactant>
    <interactant intactId="EBI-9544445">
        <id>Q3IWB0</id>
        <label>hutH</label>
    </interactant>
    <organismsDiffer>false</organismsDiffer>
    <experiments>2</experiments>
</comment>
<comment type="PTM">
    <text>Contains an active site 4-methylidene-imidazol-5-one (MIO), which is formed autocatalytically by cyclization and dehydration of residues Ala-Ser-Gly.</text>
</comment>
<comment type="similarity">
    <text evidence="3">Belongs to the PAL/histidase family.</text>
</comment>